<name>MURD_HAEIN</name>
<sequence length="437" mass="47907">MNAYQNKNITIIGLGKTGLSCVDYLLSQQANIRVIDTRKNPTGIDKLPQNIPLHTGSLNQEWLLESDMIVISPGLAVKTPEIQTALKAGVEVIGDIELFCRAATKPIVGITGSNGKSTVTTLVYEMAKAAGVKVGMGGNIGIPALSLLNEDCELYVLELSSFQLETTYSLKAAAATVLNVTEDHMDRYMDLEDYRQAKLRIYHNAKVGVLNNEDRLTFGENENQAKHTVSFAENSADYWLKTENGKQYLMVKDEVILPCEEATLVGRHNYMNILAATALAQAIGINLDSIRTALRHFKGLDHRFQLVHQANGIRWINDSKATNVGSTVAALAGLYIEGKLHLLLGGDGKGADFSELAELINQPHIICYCFGRDGALLAKFSSQSYLFDTMEQAIEFLRPTLQSGDMVLLSPACASLDQFASFEKRGEEFTHLAQCLT</sequence>
<evidence type="ECO:0000250" key="1"/>
<evidence type="ECO:0000255" key="2"/>
<evidence type="ECO:0000305" key="3"/>
<reference key="1">
    <citation type="journal article" date="1995" name="Science">
        <title>Whole-genome random sequencing and assembly of Haemophilus influenzae Rd.</title>
        <authorList>
            <person name="Fleischmann R.D."/>
            <person name="Adams M.D."/>
            <person name="White O."/>
            <person name="Clayton R.A."/>
            <person name="Kirkness E.F."/>
            <person name="Kerlavage A.R."/>
            <person name="Bult C.J."/>
            <person name="Tomb J.-F."/>
            <person name="Dougherty B.A."/>
            <person name="Merrick J.M."/>
            <person name="McKenney K."/>
            <person name="Sutton G.G."/>
            <person name="FitzHugh W."/>
            <person name="Fields C.A."/>
            <person name="Gocayne J.D."/>
            <person name="Scott J.D."/>
            <person name="Shirley R."/>
            <person name="Liu L.-I."/>
            <person name="Glodek A."/>
            <person name="Kelley J.M."/>
            <person name="Weidman J.F."/>
            <person name="Phillips C.A."/>
            <person name="Spriggs T."/>
            <person name="Hedblom E."/>
            <person name="Cotton M.D."/>
            <person name="Utterback T.R."/>
            <person name="Hanna M.C."/>
            <person name="Nguyen D.T."/>
            <person name="Saudek D.M."/>
            <person name="Brandon R.C."/>
            <person name="Fine L.D."/>
            <person name="Fritchman J.L."/>
            <person name="Fuhrmann J.L."/>
            <person name="Geoghagen N.S.M."/>
            <person name="Gnehm C.L."/>
            <person name="McDonald L.A."/>
            <person name="Small K.V."/>
            <person name="Fraser C.M."/>
            <person name="Smith H.O."/>
            <person name="Venter J.C."/>
        </authorList>
    </citation>
    <scope>NUCLEOTIDE SEQUENCE [LARGE SCALE GENOMIC DNA]</scope>
    <source>
        <strain>ATCC 51907 / DSM 11121 / KW20 / Rd</strain>
    </source>
</reference>
<proteinExistence type="inferred from homology"/>
<feature type="chain" id="PRO_0000109023" description="UDP-N-acetylmuramoylalanine--D-glutamate ligase">
    <location>
        <begin position="1"/>
        <end position="437"/>
    </location>
</feature>
<feature type="binding site" evidence="2">
    <location>
        <begin position="112"/>
        <end position="118"/>
    </location>
    <ligand>
        <name>ATP</name>
        <dbReference type="ChEBI" id="CHEBI:30616"/>
    </ligand>
</feature>
<organism>
    <name type="scientific">Haemophilus influenzae (strain ATCC 51907 / DSM 11121 / KW20 / Rd)</name>
    <dbReference type="NCBI Taxonomy" id="71421"/>
    <lineage>
        <taxon>Bacteria</taxon>
        <taxon>Pseudomonadati</taxon>
        <taxon>Pseudomonadota</taxon>
        <taxon>Gammaproteobacteria</taxon>
        <taxon>Pasteurellales</taxon>
        <taxon>Pasteurellaceae</taxon>
        <taxon>Haemophilus</taxon>
    </lineage>
</organism>
<comment type="function">
    <text evidence="1">Cell wall formation. Catalyzes the addition of glutamate to the nucleotide precursor UDP-N-acetylmuramoyl-L-alanine (UMA).</text>
</comment>
<comment type="catalytic activity">
    <reaction>
        <text>UDP-N-acetyl-alpha-D-muramoyl-L-alanine + D-glutamate + ATP = UDP-N-acetyl-alpha-D-muramoyl-L-alanyl-D-glutamate + ADP + phosphate + H(+)</text>
        <dbReference type="Rhea" id="RHEA:16429"/>
        <dbReference type="ChEBI" id="CHEBI:15378"/>
        <dbReference type="ChEBI" id="CHEBI:29986"/>
        <dbReference type="ChEBI" id="CHEBI:30616"/>
        <dbReference type="ChEBI" id="CHEBI:43474"/>
        <dbReference type="ChEBI" id="CHEBI:83898"/>
        <dbReference type="ChEBI" id="CHEBI:83900"/>
        <dbReference type="ChEBI" id="CHEBI:456216"/>
        <dbReference type="EC" id="6.3.2.9"/>
    </reaction>
</comment>
<comment type="pathway">
    <text>Cell wall biogenesis; peptidoglycan biosynthesis.</text>
</comment>
<comment type="subcellular location">
    <subcellularLocation>
        <location evidence="1">Cytoplasm</location>
    </subcellularLocation>
</comment>
<comment type="similarity">
    <text evidence="3">Belongs to the MurCDEF family.</text>
</comment>
<dbReference type="EC" id="6.3.2.9"/>
<dbReference type="EMBL" id="L42023">
    <property type="protein sequence ID" value="AAC22791.1"/>
    <property type="molecule type" value="Genomic_DNA"/>
</dbReference>
<dbReference type="PIR" id="B64185">
    <property type="entry name" value="B64185"/>
</dbReference>
<dbReference type="RefSeq" id="NP_439294.1">
    <property type="nucleotide sequence ID" value="NC_000907.1"/>
</dbReference>
<dbReference type="SMR" id="P45063"/>
<dbReference type="STRING" id="71421.HI_1136"/>
<dbReference type="EnsemblBacteria" id="AAC22791">
    <property type="protein sequence ID" value="AAC22791"/>
    <property type="gene ID" value="HI_1136"/>
</dbReference>
<dbReference type="KEGG" id="hin:HI_1136"/>
<dbReference type="PATRIC" id="fig|71421.8.peg.1186"/>
<dbReference type="eggNOG" id="COG0771">
    <property type="taxonomic scope" value="Bacteria"/>
</dbReference>
<dbReference type="HOGENOM" id="CLU_032540_1_0_6"/>
<dbReference type="OrthoDB" id="9809796at2"/>
<dbReference type="PhylomeDB" id="P45063"/>
<dbReference type="BioCyc" id="HINF71421:G1GJ1-1169-MONOMER"/>
<dbReference type="SABIO-RK" id="P45063"/>
<dbReference type="UniPathway" id="UPA00219"/>
<dbReference type="Proteomes" id="UP000000579">
    <property type="component" value="Chromosome"/>
</dbReference>
<dbReference type="GO" id="GO:0005737">
    <property type="term" value="C:cytoplasm"/>
    <property type="evidence" value="ECO:0007669"/>
    <property type="project" value="UniProtKB-SubCell"/>
</dbReference>
<dbReference type="GO" id="GO:0005524">
    <property type="term" value="F:ATP binding"/>
    <property type="evidence" value="ECO:0007669"/>
    <property type="project" value="UniProtKB-UniRule"/>
</dbReference>
<dbReference type="GO" id="GO:0008764">
    <property type="term" value="F:UDP-N-acetylmuramoylalanine-D-glutamate ligase activity"/>
    <property type="evidence" value="ECO:0007669"/>
    <property type="project" value="UniProtKB-UniRule"/>
</dbReference>
<dbReference type="GO" id="GO:0051301">
    <property type="term" value="P:cell division"/>
    <property type="evidence" value="ECO:0007669"/>
    <property type="project" value="UniProtKB-KW"/>
</dbReference>
<dbReference type="GO" id="GO:0071555">
    <property type="term" value="P:cell wall organization"/>
    <property type="evidence" value="ECO:0007669"/>
    <property type="project" value="UniProtKB-KW"/>
</dbReference>
<dbReference type="GO" id="GO:0009252">
    <property type="term" value="P:peptidoglycan biosynthetic process"/>
    <property type="evidence" value="ECO:0007669"/>
    <property type="project" value="UniProtKB-UniRule"/>
</dbReference>
<dbReference type="GO" id="GO:0008360">
    <property type="term" value="P:regulation of cell shape"/>
    <property type="evidence" value="ECO:0007669"/>
    <property type="project" value="UniProtKB-KW"/>
</dbReference>
<dbReference type="Gene3D" id="3.90.190.20">
    <property type="entry name" value="Mur ligase, C-terminal domain"/>
    <property type="match status" value="1"/>
</dbReference>
<dbReference type="Gene3D" id="3.40.1190.10">
    <property type="entry name" value="Mur-like, catalytic domain"/>
    <property type="match status" value="1"/>
</dbReference>
<dbReference type="Gene3D" id="3.40.50.720">
    <property type="entry name" value="NAD(P)-binding Rossmann-like Domain"/>
    <property type="match status" value="1"/>
</dbReference>
<dbReference type="HAMAP" id="MF_00639">
    <property type="entry name" value="MurD"/>
    <property type="match status" value="1"/>
</dbReference>
<dbReference type="InterPro" id="IPR036565">
    <property type="entry name" value="Mur-like_cat_sf"/>
</dbReference>
<dbReference type="InterPro" id="IPR004101">
    <property type="entry name" value="Mur_ligase_C"/>
</dbReference>
<dbReference type="InterPro" id="IPR036615">
    <property type="entry name" value="Mur_ligase_C_dom_sf"/>
</dbReference>
<dbReference type="InterPro" id="IPR013221">
    <property type="entry name" value="Mur_ligase_cen"/>
</dbReference>
<dbReference type="InterPro" id="IPR005762">
    <property type="entry name" value="MurD"/>
</dbReference>
<dbReference type="NCBIfam" id="TIGR01087">
    <property type="entry name" value="murD"/>
    <property type="match status" value="1"/>
</dbReference>
<dbReference type="PANTHER" id="PTHR43692">
    <property type="entry name" value="UDP-N-ACETYLMURAMOYLALANINE--D-GLUTAMATE LIGASE"/>
    <property type="match status" value="1"/>
</dbReference>
<dbReference type="PANTHER" id="PTHR43692:SF1">
    <property type="entry name" value="UDP-N-ACETYLMURAMOYLALANINE--D-GLUTAMATE LIGASE"/>
    <property type="match status" value="1"/>
</dbReference>
<dbReference type="Pfam" id="PF02875">
    <property type="entry name" value="Mur_ligase_C"/>
    <property type="match status" value="1"/>
</dbReference>
<dbReference type="Pfam" id="PF08245">
    <property type="entry name" value="Mur_ligase_M"/>
    <property type="match status" value="1"/>
</dbReference>
<dbReference type="Pfam" id="PF21799">
    <property type="entry name" value="MurD-like_N"/>
    <property type="match status" value="1"/>
</dbReference>
<dbReference type="SUPFAM" id="SSF51984">
    <property type="entry name" value="MurCD N-terminal domain"/>
    <property type="match status" value="1"/>
</dbReference>
<dbReference type="SUPFAM" id="SSF53623">
    <property type="entry name" value="MurD-like peptide ligases, catalytic domain"/>
    <property type="match status" value="1"/>
</dbReference>
<dbReference type="SUPFAM" id="SSF53244">
    <property type="entry name" value="MurD-like peptide ligases, peptide-binding domain"/>
    <property type="match status" value="1"/>
</dbReference>
<keyword id="KW-0067">ATP-binding</keyword>
<keyword id="KW-0131">Cell cycle</keyword>
<keyword id="KW-0132">Cell division</keyword>
<keyword id="KW-0133">Cell shape</keyword>
<keyword id="KW-0961">Cell wall biogenesis/degradation</keyword>
<keyword id="KW-0963">Cytoplasm</keyword>
<keyword id="KW-0436">Ligase</keyword>
<keyword id="KW-0547">Nucleotide-binding</keyword>
<keyword id="KW-0573">Peptidoglycan synthesis</keyword>
<keyword id="KW-1185">Reference proteome</keyword>
<protein>
    <recommendedName>
        <fullName>UDP-N-acetylmuramoylalanine--D-glutamate ligase</fullName>
        <ecNumber>6.3.2.9</ecNumber>
    </recommendedName>
    <alternativeName>
        <fullName>D-glutamic acid-adding enzyme</fullName>
    </alternativeName>
    <alternativeName>
        <fullName>UDP-N-acetylmuramoyl-L-alanyl-D-glutamate synthetase</fullName>
    </alternativeName>
</protein>
<gene>
    <name type="primary">murD</name>
    <name type="ordered locus">HI_1136</name>
</gene>
<accession>P45063</accession>